<organism>
    <name type="scientific">Xanthomonas campestris pv. phaseoli</name>
    <dbReference type="NCBI Taxonomy" id="317013"/>
    <lineage>
        <taxon>Bacteria</taxon>
        <taxon>Pseudomonadati</taxon>
        <taxon>Pseudomonadota</taxon>
        <taxon>Gammaproteobacteria</taxon>
        <taxon>Lysobacterales</taxon>
        <taxon>Lysobacteraceae</taxon>
        <taxon>Xanthomonas</taxon>
    </lineage>
</organism>
<reference key="1">
    <citation type="submission" date="2001-10" db="EMBL/GenBank/DDBJ databases">
        <authorList>
            <person name="Hsu C.-C."/>
            <person name="Yu Y.-J."/>
            <person name="Yang M.-T."/>
        </authorList>
    </citation>
    <scope>NUCLEOTIDE SEQUENCE [GENOMIC DNA]</scope>
</reference>
<feature type="chain" id="PRO_0000063606" description="Chaperonin GroEL">
    <location>
        <begin position="1"/>
        <end position="546"/>
    </location>
</feature>
<feature type="binding site" evidence="1">
    <location>
        <begin position="30"/>
        <end position="33"/>
    </location>
    <ligand>
        <name>ATP</name>
        <dbReference type="ChEBI" id="CHEBI:30616"/>
    </ligand>
</feature>
<feature type="binding site" evidence="1">
    <location>
        <position position="51"/>
    </location>
    <ligand>
        <name>ATP</name>
        <dbReference type="ChEBI" id="CHEBI:30616"/>
    </ligand>
</feature>
<feature type="binding site" evidence="1">
    <location>
        <begin position="87"/>
        <end position="91"/>
    </location>
    <ligand>
        <name>ATP</name>
        <dbReference type="ChEBI" id="CHEBI:30616"/>
    </ligand>
</feature>
<feature type="binding site" evidence="1">
    <location>
        <position position="415"/>
    </location>
    <ligand>
        <name>ATP</name>
        <dbReference type="ChEBI" id="CHEBI:30616"/>
    </ligand>
</feature>
<feature type="binding site" evidence="1">
    <location>
        <begin position="479"/>
        <end position="481"/>
    </location>
    <ligand>
        <name>ATP</name>
        <dbReference type="ChEBI" id="CHEBI:30616"/>
    </ligand>
</feature>
<feature type="binding site" evidence="1">
    <location>
        <position position="495"/>
    </location>
    <ligand>
        <name>ATP</name>
        <dbReference type="ChEBI" id="CHEBI:30616"/>
    </ligand>
</feature>
<accession>Q8RIT7</accession>
<protein>
    <recommendedName>
        <fullName evidence="1">Chaperonin GroEL</fullName>
        <ecNumber evidence="1">5.6.1.7</ecNumber>
    </recommendedName>
    <alternativeName>
        <fullName evidence="1">60 kDa chaperonin</fullName>
    </alternativeName>
    <alternativeName>
        <fullName evidence="1">Chaperonin-60</fullName>
        <shortName evidence="1">Cpn60</shortName>
    </alternativeName>
</protein>
<dbReference type="EC" id="5.6.1.7" evidence="1"/>
<dbReference type="EMBL" id="AF426387">
    <property type="protein sequence ID" value="AAL74150.1"/>
    <property type="molecule type" value="Genomic_DNA"/>
</dbReference>
<dbReference type="RefSeq" id="WP_039570863.1">
    <property type="nucleotide sequence ID" value="NZ_OCZD01000131.1"/>
</dbReference>
<dbReference type="SMR" id="Q8RIT7"/>
<dbReference type="eggNOG" id="COG0459">
    <property type="taxonomic scope" value="Bacteria"/>
</dbReference>
<dbReference type="GO" id="GO:0005737">
    <property type="term" value="C:cytoplasm"/>
    <property type="evidence" value="ECO:0007669"/>
    <property type="project" value="UniProtKB-SubCell"/>
</dbReference>
<dbReference type="GO" id="GO:0005524">
    <property type="term" value="F:ATP binding"/>
    <property type="evidence" value="ECO:0007669"/>
    <property type="project" value="UniProtKB-UniRule"/>
</dbReference>
<dbReference type="GO" id="GO:0140662">
    <property type="term" value="F:ATP-dependent protein folding chaperone"/>
    <property type="evidence" value="ECO:0007669"/>
    <property type="project" value="InterPro"/>
</dbReference>
<dbReference type="GO" id="GO:0016853">
    <property type="term" value="F:isomerase activity"/>
    <property type="evidence" value="ECO:0007669"/>
    <property type="project" value="UniProtKB-KW"/>
</dbReference>
<dbReference type="GO" id="GO:0051082">
    <property type="term" value="F:unfolded protein binding"/>
    <property type="evidence" value="ECO:0007669"/>
    <property type="project" value="UniProtKB-UniRule"/>
</dbReference>
<dbReference type="GO" id="GO:0042026">
    <property type="term" value="P:protein refolding"/>
    <property type="evidence" value="ECO:0007669"/>
    <property type="project" value="UniProtKB-UniRule"/>
</dbReference>
<dbReference type="CDD" id="cd03344">
    <property type="entry name" value="GroEL"/>
    <property type="match status" value="1"/>
</dbReference>
<dbReference type="FunFam" id="1.10.560.10:FF:000001">
    <property type="entry name" value="60 kDa chaperonin"/>
    <property type="match status" value="1"/>
</dbReference>
<dbReference type="FunFam" id="3.50.7.10:FF:000001">
    <property type="entry name" value="60 kDa chaperonin"/>
    <property type="match status" value="1"/>
</dbReference>
<dbReference type="Gene3D" id="3.50.7.10">
    <property type="entry name" value="GroEL"/>
    <property type="match status" value="1"/>
</dbReference>
<dbReference type="Gene3D" id="1.10.560.10">
    <property type="entry name" value="GroEL-like equatorial domain"/>
    <property type="match status" value="1"/>
</dbReference>
<dbReference type="Gene3D" id="3.30.260.10">
    <property type="entry name" value="TCP-1-like chaperonin intermediate domain"/>
    <property type="match status" value="1"/>
</dbReference>
<dbReference type="HAMAP" id="MF_00600">
    <property type="entry name" value="CH60"/>
    <property type="match status" value="1"/>
</dbReference>
<dbReference type="InterPro" id="IPR018370">
    <property type="entry name" value="Chaperonin_Cpn60_CS"/>
</dbReference>
<dbReference type="InterPro" id="IPR001844">
    <property type="entry name" value="Cpn60/GroEL"/>
</dbReference>
<dbReference type="InterPro" id="IPR002423">
    <property type="entry name" value="Cpn60/GroEL/TCP-1"/>
</dbReference>
<dbReference type="InterPro" id="IPR027409">
    <property type="entry name" value="GroEL-like_apical_dom_sf"/>
</dbReference>
<dbReference type="InterPro" id="IPR027413">
    <property type="entry name" value="GROEL-like_equatorial_sf"/>
</dbReference>
<dbReference type="InterPro" id="IPR027410">
    <property type="entry name" value="TCP-1-like_intermed_sf"/>
</dbReference>
<dbReference type="NCBIfam" id="TIGR02348">
    <property type="entry name" value="GroEL"/>
    <property type="match status" value="1"/>
</dbReference>
<dbReference type="NCBIfam" id="NF000592">
    <property type="entry name" value="PRK00013.1"/>
    <property type="match status" value="1"/>
</dbReference>
<dbReference type="NCBIfam" id="NF009487">
    <property type="entry name" value="PRK12849.1"/>
    <property type="match status" value="1"/>
</dbReference>
<dbReference type="NCBIfam" id="NF009488">
    <property type="entry name" value="PRK12850.1"/>
    <property type="match status" value="1"/>
</dbReference>
<dbReference type="NCBIfam" id="NF009489">
    <property type="entry name" value="PRK12851.1"/>
    <property type="match status" value="1"/>
</dbReference>
<dbReference type="PANTHER" id="PTHR45633">
    <property type="entry name" value="60 KDA HEAT SHOCK PROTEIN, MITOCHONDRIAL"/>
    <property type="match status" value="1"/>
</dbReference>
<dbReference type="Pfam" id="PF00118">
    <property type="entry name" value="Cpn60_TCP1"/>
    <property type="match status" value="1"/>
</dbReference>
<dbReference type="PRINTS" id="PR00298">
    <property type="entry name" value="CHAPERONIN60"/>
</dbReference>
<dbReference type="SUPFAM" id="SSF52029">
    <property type="entry name" value="GroEL apical domain-like"/>
    <property type="match status" value="1"/>
</dbReference>
<dbReference type="SUPFAM" id="SSF48592">
    <property type="entry name" value="GroEL equatorial domain-like"/>
    <property type="match status" value="1"/>
</dbReference>
<dbReference type="SUPFAM" id="SSF54849">
    <property type="entry name" value="GroEL-intermediate domain like"/>
    <property type="match status" value="1"/>
</dbReference>
<dbReference type="PROSITE" id="PS00296">
    <property type="entry name" value="CHAPERONINS_CPN60"/>
    <property type="match status" value="1"/>
</dbReference>
<gene>
    <name evidence="1" type="primary">groEL</name>
    <name evidence="1" type="synonym">groL</name>
</gene>
<sequence>MAAKDIRFGEDARTRMVRGVNVLANAVKATLGPKGRNVVLEKSFGAPTITKDGVSVAKEIELADKFENMGAQMVKEVASKTNDNAGDGTTTATVLAQALIREGAKAVAAGMNPMDLKRGIDQAVKAAVVELKNISKPTTDDKAIAQVGTISANSDESIGNIIAEAMQKVGKEGVITVEEGSGLENELDVVEGMQFDRGYLSPYFINNQQSQSADLDDPFILLHDKKISNVRDLLPVLEGVAKAGKPLLIVAEEVEGEALATLVVNTIRGIVKVVAVKAPGFGDRRKAMLEDMAVLTGGTVISEEVGLALEKATIKDLGRAKKVQVSKENTTIIDGAGDTAAIESRVGQIKTQIEDTSSDYDREKLQERVAKLAGGVAVIKVGASTEIEMKEKKARVEDALHATRAAVEEGVVPGGGVALVRALVAVGELKGANEDQTHGIQIALRAMEAPLREIVANAGEEPSVILNKVKEGSGNYGYNAANGEFGDMVQFGILDPTKVTRSALQNAASIAGLMITTEAMVADAPKKDEPVMPAGGGMGGMGGMDF</sequence>
<evidence type="ECO:0000255" key="1">
    <source>
        <dbReference type="HAMAP-Rule" id="MF_00600"/>
    </source>
</evidence>
<proteinExistence type="inferred from homology"/>
<name>CH60_XANCH</name>
<comment type="function">
    <text evidence="1">Together with its co-chaperonin GroES, plays an essential role in assisting protein folding. The GroEL-GroES system forms a nano-cage that allows encapsulation of the non-native substrate proteins and provides a physical environment optimized to promote and accelerate protein folding.</text>
</comment>
<comment type="catalytic activity">
    <reaction evidence="1">
        <text>ATP + H2O + a folded polypeptide = ADP + phosphate + an unfolded polypeptide.</text>
        <dbReference type="EC" id="5.6.1.7"/>
    </reaction>
</comment>
<comment type="subunit">
    <text evidence="1">Forms a cylinder of 14 subunits composed of two heptameric rings stacked back-to-back. Interacts with the co-chaperonin GroES.</text>
</comment>
<comment type="subcellular location">
    <subcellularLocation>
        <location evidence="1">Cytoplasm</location>
    </subcellularLocation>
</comment>
<comment type="similarity">
    <text evidence="1">Belongs to the chaperonin (HSP60) family.</text>
</comment>
<keyword id="KW-0067">ATP-binding</keyword>
<keyword id="KW-0143">Chaperone</keyword>
<keyword id="KW-0963">Cytoplasm</keyword>
<keyword id="KW-0413">Isomerase</keyword>
<keyword id="KW-0547">Nucleotide-binding</keyword>